<proteinExistence type="inferred from homology"/>
<feature type="chain" id="PRO_1000018975" description="Bifunctional purine biosynthesis protein PurH">
    <location>
        <begin position="1"/>
        <end position="515"/>
    </location>
</feature>
<feature type="domain" description="MGS-like" evidence="2">
    <location>
        <begin position="1"/>
        <end position="145"/>
    </location>
</feature>
<evidence type="ECO:0000255" key="1">
    <source>
        <dbReference type="HAMAP-Rule" id="MF_00139"/>
    </source>
</evidence>
<evidence type="ECO:0000255" key="2">
    <source>
        <dbReference type="PROSITE-ProRule" id="PRU01202"/>
    </source>
</evidence>
<name>PUR9_STRTD</name>
<sequence>MTKRALISVSDKAGIVEFAQELKKLGWDIISTGGTKVTLDNAGVDTIAIDDVTGFPEMMDGRVKTLHPNIHGGLLARRDLHSHLQAAKDNNIELIDLVVVNLYPFKETILKPDVTYADAVENIDIGGPSMLRSAAKNHASVTVVVDPADYAVVLDELSANGETTYETRQRLAAKVYRHTASYDALIAEYFTAQVGETKPEKLTLTYDLKQPMRYGENPQQDADFYQKGLPTAYSIASAKQLNGKELSFNNIRDADAAIRIIRDFKDRPTVVALKHMNPCGIGQADDIETAWDYAYEADPVSIFGGIVVLNREVDAATAKKMHGVFLEIIIAPSYTDEALEILTTKKKNLRILELPFDAQDASEAEAEYTGVVGGLLVQNQDVVKESPADWQVVTKRQPTDTEVTALEFAWKAVKYVKSNGIIVTNDHMTLGVGPGQTNRVASVRIAIDQAKGRLDGAVLASDAFFPFADNVEEIAKAGIKAIIQPGGSVRDQESIEAADKYGLTMIFTGVRHFRH</sequence>
<dbReference type="EC" id="2.1.2.3" evidence="1"/>
<dbReference type="EC" id="3.5.4.10" evidence="1"/>
<dbReference type="EMBL" id="CP000419">
    <property type="protein sequence ID" value="ABJ65426.1"/>
    <property type="molecule type" value="Genomic_DNA"/>
</dbReference>
<dbReference type="RefSeq" id="WP_011680593.1">
    <property type="nucleotide sequence ID" value="NC_008532.1"/>
</dbReference>
<dbReference type="SMR" id="Q03MZ6"/>
<dbReference type="KEGG" id="ste:STER_0054"/>
<dbReference type="HOGENOM" id="CLU_016316_5_2_9"/>
<dbReference type="UniPathway" id="UPA00074">
    <property type="reaction ID" value="UER00133"/>
</dbReference>
<dbReference type="UniPathway" id="UPA00074">
    <property type="reaction ID" value="UER00135"/>
</dbReference>
<dbReference type="GO" id="GO:0005829">
    <property type="term" value="C:cytosol"/>
    <property type="evidence" value="ECO:0007669"/>
    <property type="project" value="TreeGrafter"/>
</dbReference>
<dbReference type="GO" id="GO:0003937">
    <property type="term" value="F:IMP cyclohydrolase activity"/>
    <property type="evidence" value="ECO:0007669"/>
    <property type="project" value="UniProtKB-UniRule"/>
</dbReference>
<dbReference type="GO" id="GO:0004643">
    <property type="term" value="F:phosphoribosylaminoimidazolecarboxamide formyltransferase activity"/>
    <property type="evidence" value="ECO:0007669"/>
    <property type="project" value="UniProtKB-UniRule"/>
</dbReference>
<dbReference type="GO" id="GO:0006189">
    <property type="term" value="P:'de novo' IMP biosynthetic process"/>
    <property type="evidence" value="ECO:0007669"/>
    <property type="project" value="UniProtKB-UniRule"/>
</dbReference>
<dbReference type="CDD" id="cd01421">
    <property type="entry name" value="IMPCH"/>
    <property type="match status" value="1"/>
</dbReference>
<dbReference type="FunFam" id="3.40.140.20:FF:000001">
    <property type="entry name" value="Bifunctional purine biosynthesis protein PurH"/>
    <property type="match status" value="1"/>
</dbReference>
<dbReference type="FunFam" id="3.40.140.20:FF:000002">
    <property type="entry name" value="Bifunctional purine biosynthesis protein PurH"/>
    <property type="match status" value="1"/>
</dbReference>
<dbReference type="FunFam" id="3.40.50.1380:FF:000001">
    <property type="entry name" value="Bifunctional purine biosynthesis protein PurH"/>
    <property type="match status" value="1"/>
</dbReference>
<dbReference type="Gene3D" id="3.40.140.20">
    <property type="match status" value="2"/>
</dbReference>
<dbReference type="Gene3D" id="3.40.50.1380">
    <property type="entry name" value="Methylglyoxal synthase-like domain"/>
    <property type="match status" value="1"/>
</dbReference>
<dbReference type="HAMAP" id="MF_00139">
    <property type="entry name" value="PurH"/>
    <property type="match status" value="1"/>
</dbReference>
<dbReference type="InterPro" id="IPR024051">
    <property type="entry name" value="AICAR_Tfase_dup_dom_sf"/>
</dbReference>
<dbReference type="InterPro" id="IPR016193">
    <property type="entry name" value="Cytidine_deaminase-like"/>
</dbReference>
<dbReference type="InterPro" id="IPR011607">
    <property type="entry name" value="MGS-like_dom"/>
</dbReference>
<dbReference type="InterPro" id="IPR036914">
    <property type="entry name" value="MGS-like_dom_sf"/>
</dbReference>
<dbReference type="InterPro" id="IPR002695">
    <property type="entry name" value="PurH-like"/>
</dbReference>
<dbReference type="NCBIfam" id="NF002049">
    <property type="entry name" value="PRK00881.1"/>
    <property type="match status" value="1"/>
</dbReference>
<dbReference type="NCBIfam" id="TIGR00355">
    <property type="entry name" value="purH"/>
    <property type="match status" value="1"/>
</dbReference>
<dbReference type="PANTHER" id="PTHR11692:SF0">
    <property type="entry name" value="BIFUNCTIONAL PURINE BIOSYNTHESIS PROTEIN ATIC"/>
    <property type="match status" value="1"/>
</dbReference>
<dbReference type="PANTHER" id="PTHR11692">
    <property type="entry name" value="BIFUNCTIONAL PURINE BIOSYNTHESIS PROTEIN PURH"/>
    <property type="match status" value="1"/>
</dbReference>
<dbReference type="Pfam" id="PF01808">
    <property type="entry name" value="AICARFT_IMPCHas"/>
    <property type="match status" value="1"/>
</dbReference>
<dbReference type="Pfam" id="PF02142">
    <property type="entry name" value="MGS"/>
    <property type="match status" value="1"/>
</dbReference>
<dbReference type="PIRSF" id="PIRSF000414">
    <property type="entry name" value="AICARFT_IMPCHas"/>
    <property type="match status" value="1"/>
</dbReference>
<dbReference type="SMART" id="SM00798">
    <property type="entry name" value="AICARFT_IMPCHas"/>
    <property type="match status" value="1"/>
</dbReference>
<dbReference type="SMART" id="SM00851">
    <property type="entry name" value="MGS"/>
    <property type="match status" value="1"/>
</dbReference>
<dbReference type="SUPFAM" id="SSF53927">
    <property type="entry name" value="Cytidine deaminase-like"/>
    <property type="match status" value="1"/>
</dbReference>
<dbReference type="SUPFAM" id="SSF52335">
    <property type="entry name" value="Methylglyoxal synthase-like"/>
    <property type="match status" value="1"/>
</dbReference>
<dbReference type="PROSITE" id="PS51855">
    <property type="entry name" value="MGS"/>
    <property type="match status" value="1"/>
</dbReference>
<accession>Q03MZ6</accession>
<protein>
    <recommendedName>
        <fullName evidence="1">Bifunctional purine biosynthesis protein PurH</fullName>
    </recommendedName>
    <domain>
        <recommendedName>
            <fullName evidence="1">Phosphoribosylaminoimidazolecarboxamide formyltransferase</fullName>
            <ecNumber evidence="1">2.1.2.3</ecNumber>
        </recommendedName>
        <alternativeName>
            <fullName evidence="1">AICAR transformylase</fullName>
        </alternativeName>
    </domain>
    <domain>
        <recommendedName>
            <fullName evidence="1">IMP cyclohydrolase</fullName>
            <ecNumber evidence="1">3.5.4.10</ecNumber>
        </recommendedName>
        <alternativeName>
            <fullName evidence="1">ATIC</fullName>
        </alternativeName>
        <alternativeName>
            <fullName evidence="1">IMP synthase</fullName>
        </alternativeName>
        <alternativeName>
            <fullName evidence="1">Inosinicase</fullName>
        </alternativeName>
    </domain>
</protein>
<comment type="catalytic activity">
    <reaction evidence="1">
        <text>(6R)-10-formyltetrahydrofolate + 5-amino-1-(5-phospho-beta-D-ribosyl)imidazole-4-carboxamide = 5-formamido-1-(5-phospho-D-ribosyl)imidazole-4-carboxamide + (6S)-5,6,7,8-tetrahydrofolate</text>
        <dbReference type="Rhea" id="RHEA:22192"/>
        <dbReference type="ChEBI" id="CHEBI:57453"/>
        <dbReference type="ChEBI" id="CHEBI:58467"/>
        <dbReference type="ChEBI" id="CHEBI:58475"/>
        <dbReference type="ChEBI" id="CHEBI:195366"/>
        <dbReference type="EC" id="2.1.2.3"/>
    </reaction>
</comment>
<comment type="catalytic activity">
    <reaction evidence="1">
        <text>IMP + H2O = 5-formamido-1-(5-phospho-D-ribosyl)imidazole-4-carboxamide</text>
        <dbReference type="Rhea" id="RHEA:18445"/>
        <dbReference type="ChEBI" id="CHEBI:15377"/>
        <dbReference type="ChEBI" id="CHEBI:58053"/>
        <dbReference type="ChEBI" id="CHEBI:58467"/>
        <dbReference type="EC" id="3.5.4.10"/>
    </reaction>
</comment>
<comment type="pathway">
    <text evidence="1">Purine metabolism; IMP biosynthesis via de novo pathway; 5-formamido-1-(5-phospho-D-ribosyl)imidazole-4-carboxamide from 5-amino-1-(5-phospho-D-ribosyl)imidazole-4-carboxamide (10-formyl THF route): step 1/1.</text>
</comment>
<comment type="pathway">
    <text evidence="1">Purine metabolism; IMP biosynthesis via de novo pathway; IMP from 5-formamido-1-(5-phospho-D-ribosyl)imidazole-4-carboxamide: step 1/1.</text>
</comment>
<comment type="domain">
    <text evidence="1">The IMP cyclohydrolase activity resides in the N-terminal region.</text>
</comment>
<comment type="similarity">
    <text evidence="1">Belongs to the PurH family.</text>
</comment>
<reference key="1">
    <citation type="journal article" date="2006" name="Proc. Natl. Acad. Sci. U.S.A.">
        <title>Comparative genomics of the lactic acid bacteria.</title>
        <authorList>
            <person name="Makarova K.S."/>
            <person name="Slesarev A."/>
            <person name="Wolf Y.I."/>
            <person name="Sorokin A."/>
            <person name="Mirkin B."/>
            <person name="Koonin E.V."/>
            <person name="Pavlov A."/>
            <person name="Pavlova N."/>
            <person name="Karamychev V."/>
            <person name="Polouchine N."/>
            <person name="Shakhova V."/>
            <person name="Grigoriev I."/>
            <person name="Lou Y."/>
            <person name="Rohksar D."/>
            <person name="Lucas S."/>
            <person name="Huang K."/>
            <person name="Goodstein D.M."/>
            <person name="Hawkins T."/>
            <person name="Plengvidhya V."/>
            <person name="Welker D."/>
            <person name="Hughes J."/>
            <person name="Goh Y."/>
            <person name="Benson A."/>
            <person name="Baldwin K."/>
            <person name="Lee J.-H."/>
            <person name="Diaz-Muniz I."/>
            <person name="Dosti B."/>
            <person name="Smeianov V."/>
            <person name="Wechter W."/>
            <person name="Barabote R."/>
            <person name="Lorca G."/>
            <person name="Altermann E."/>
            <person name="Barrangou R."/>
            <person name="Ganesan B."/>
            <person name="Xie Y."/>
            <person name="Rawsthorne H."/>
            <person name="Tamir D."/>
            <person name="Parker C."/>
            <person name="Breidt F."/>
            <person name="Broadbent J.R."/>
            <person name="Hutkins R."/>
            <person name="O'Sullivan D."/>
            <person name="Steele J."/>
            <person name="Unlu G."/>
            <person name="Saier M.H. Jr."/>
            <person name="Klaenhammer T."/>
            <person name="Richardson P."/>
            <person name="Kozyavkin S."/>
            <person name="Weimer B.C."/>
            <person name="Mills D.A."/>
        </authorList>
    </citation>
    <scope>NUCLEOTIDE SEQUENCE [LARGE SCALE GENOMIC DNA]</scope>
    <source>
        <strain>ATCC BAA-491 / LMD-9</strain>
    </source>
</reference>
<keyword id="KW-0378">Hydrolase</keyword>
<keyword id="KW-0511">Multifunctional enzyme</keyword>
<keyword id="KW-0658">Purine biosynthesis</keyword>
<keyword id="KW-0808">Transferase</keyword>
<organism>
    <name type="scientific">Streptococcus thermophilus (strain ATCC BAA-491 / LMD-9)</name>
    <dbReference type="NCBI Taxonomy" id="322159"/>
    <lineage>
        <taxon>Bacteria</taxon>
        <taxon>Bacillati</taxon>
        <taxon>Bacillota</taxon>
        <taxon>Bacilli</taxon>
        <taxon>Lactobacillales</taxon>
        <taxon>Streptococcaceae</taxon>
        <taxon>Streptococcus</taxon>
    </lineage>
</organism>
<gene>
    <name evidence="1" type="primary">purH</name>
    <name type="ordered locus">STER_0054</name>
</gene>